<gene>
    <name evidence="1" type="primary">trpA</name>
    <name type="ordered locus">Dtpsy_2593</name>
</gene>
<name>TRPA_ACIET</name>
<reference key="1">
    <citation type="submission" date="2009-01" db="EMBL/GenBank/DDBJ databases">
        <title>Complete sequence of Diaphorobacter sp. TPSY.</title>
        <authorList>
            <consortium name="US DOE Joint Genome Institute"/>
            <person name="Lucas S."/>
            <person name="Copeland A."/>
            <person name="Lapidus A."/>
            <person name="Glavina del Rio T."/>
            <person name="Tice H."/>
            <person name="Bruce D."/>
            <person name="Goodwin L."/>
            <person name="Pitluck S."/>
            <person name="Chertkov O."/>
            <person name="Brettin T."/>
            <person name="Detter J.C."/>
            <person name="Han C."/>
            <person name="Larimer F."/>
            <person name="Land M."/>
            <person name="Hauser L."/>
            <person name="Kyrpides N."/>
            <person name="Mikhailova N."/>
            <person name="Coates J.D."/>
        </authorList>
    </citation>
    <scope>NUCLEOTIDE SEQUENCE [LARGE SCALE GENOMIC DNA]</scope>
    <source>
        <strain>TPSY</strain>
    </source>
</reference>
<accession>B9MDL9</accession>
<proteinExistence type="inferred from homology"/>
<comment type="function">
    <text evidence="1">The alpha subunit is responsible for the aldol cleavage of indoleglycerol phosphate to indole and glyceraldehyde 3-phosphate.</text>
</comment>
<comment type="catalytic activity">
    <reaction evidence="1">
        <text>(1S,2R)-1-C-(indol-3-yl)glycerol 3-phosphate + L-serine = D-glyceraldehyde 3-phosphate + L-tryptophan + H2O</text>
        <dbReference type="Rhea" id="RHEA:10532"/>
        <dbReference type="ChEBI" id="CHEBI:15377"/>
        <dbReference type="ChEBI" id="CHEBI:33384"/>
        <dbReference type="ChEBI" id="CHEBI:57912"/>
        <dbReference type="ChEBI" id="CHEBI:58866"/>
        <dbReference type="ChEBI" id="CHEBI:59776"/>
        <dbReference type="EC" id="4.2.1.20"/>
    </reaction>
</comment>
<comment type="pathway">
    <text evidence="1">Amino-acid biosynthesis; L-tryptophan biosynthesis; L-tryptophan from chorismate: step 5/5.</text>
</comment>
<comment type="subunit">
    <text evidence="1">Tetramer of two alpha and two beta chains.</text>
</comment>
<comment type="similarity">
    <text evidence="1">Belongs to the TrpA family.</text>
</comment>
<dbReference type="EC" id="4.2.1.20" evidence="1"/>
<dbReference type="EMBL" id="CP001392">
    <property type="protein sequence ID" value="ACM34028.1"/>
    <property type="molecule type" value="Genomic_DNA"/>
</dbReference>
<dbReference type="RefSeq" id="WP_015913948.1">
    <property type="nucleotide sequence ID" value="NC_011992.1"/>
</dbReference>
<dbReference type="SMR" id="B9MDL9"/>
<dbReference type="KEGG" id="dia:Dtpsy_2593"/>
<dbReference type="eggNOG" id="COG0159">
    <property type="taxonomic scope" value="Bacteria"/>
</dbReference>
<dbReference type="HOGENOM" id="CLU_016734_0_0_4"/>
<dbReference type="UniPathway" id="UPA00035">
    <property type="reaction ID" value="UER00044"/>
</dbReference>
<dbReference type="Proteomes" id="UP000000450">
    <property type="component" value="Chromosome"/>
</dbReference>
<dbReference type="GO" id="GO:0005829">
    <property type="term" value="C:cytosol"/>
    <property type="evidence" value="ECO:0007669"/>
    <property type="project" value="TreeGrafter"/>
</dbReference>
<dbReference type="GO" id="GO:0004834">
    <property type="term" value="F:tryptophan synthase activity"/>
    <property type="evidence" value="ECO:0007669"/>
    <property type="project" value="UniProtKB-UniRule"/>
</dbReference>
<dbReference type="CDD" id="cd04724">
    <property type="entry name" value="Tryptophan_synthase_alpha"/>
    <property type="match status" value="1"/>
</dbReference>
<dbReference type="FunFam" id="3.20.20.70:FF:000037">
    <property type="entry name" value="Tryptophan synthase alpha chain"/>
    <property type="match status" value="1"/>
</dbReference>
<dbReference type="Gene3D" id="3.20.20.70">
    <property type="entry name" value="Aldolase class I"/>
    <property type="match status" value="1"/>
</dbReference>
<dbReference type="HAMAP" id="MF_00131">
    <property type="entry name" value="Trp_synth_alpha"/>
    <property type="match status" value="1"/>
</dbReference>
<dbReference type="InterPro" id="IPR013785">
    <property type="entry name" value="Aldolase_TIM"/>
</dbReference>
<dbReference type="InterPro" id="IPR011060">
    <property type="entry name" value="RibuloseP-bd_barrel"/>
</dbReference>
<dbReference type="InterPro" id="IPR018204">
    <property type="entry name" value="Trp_synthase_alpha_AS"/>
</dbReference>
<dbReference type="InterPro" id="IPR002028">
    <property type="entry name" value="Trp_synthase_suA"/>
</dbReference>
<dbReference type="NCBIfam" id="TIGR00262">
    <property type="entry name" value="trpA"/>
    <property type="match status" value="1"/>
</dbReference>
<dbReference type="PANTHER" id="PTHR43406:SF1">
    <property type="entry name" value="TRYPTOPHAN SYNTHASE ALPHA CHAIN, CHLOROPLASTIC"/>
    <property type="match status" value="1"/>
</dbReference>
<dbReference type="PANTHER" id="PTHR43406">
    <property type="entry name" value="TRYPTOPHAN SYNTHASE, ALPHA CHAIN"/>
    <property type="match status" value="1"/>
</dbReference>
<dbReference type="Pfam" id="PF00290">
    <property type="entry name" value="Trp_syntA"/>
    <property type="match status" value="1"/>
</dbReference>
<dbReference type="SUPFAM" id="SSF51366">
    <property type="entry name" value="Ribulose-phoshate binding barrel"/>
    <property type="match status" value="1"/>
</dbReference>
<dbReference type="PROSITE" id="PS00167">
    <property type="entry name" value="TRP_SYNTHASE_ALPHA"/>
    <property type="match status" value="1"/>
</dbReference>
<sequence length="269" mass="28653">MSRIADTFAELQSKGRKALIPYVTAGFPFVDITPALMHGMVEAGADVIELGVPFSDPMADGPVIQKAGEKALALGVGLAQVLEMVRSFRLRNSTTPVVLMGYANPVERYEQRHGKGAFARDAGEAGVDGVLIVDYPPEECEQFAADLRGHGIDLIFLLAPTSTAERMQQVARVASGYVYYVSLKGVTGSGALDTAAVEAMLPRIREHVKIPVGVGFGIRDAATAQAIGRVADAVVIGSRIIQLIEDQPHEKVVGITVDFLRGVRKALDA</sequence>
<protein>
    <recommendedName>
        <fullName evidence="1">Tryptophan synthase alpha chain</fullName>
        <ecNumber evidence="1">4.2.1.20</ecNumber>
    </recommendedName>
</protein>
<evidence type="ECO:0000255" key="1">
    <source>
        <dbReference type="HAMAP-Rule" id="MF_00131"/>
    </source>
</evidence>
<feature type="chain" id="PRO_1000198710" description="Tryptophan synthase alpha chain">
    <location>
        <begin position="1"/>
        <end position="269"/>
    </location>
</feature>
<feature type="active site" description="Proton acceptor" evidence="1">
    <location>
        <position position="49"/>
    </location>
</feature>
<feature type="active site" description="Proton acceptor" evidence="1">
    <location>
        <position position="60"/>
    </location>
</feature>
<keyword id="KW-0028">Amino-acid biosynthesis</keyword>
<keyword id="KW-0057">Aromatic amino acid biosynthesis</keyword>
<keyword id="KW-0456">Lyase</keyword>
<keyword id="KW-1185">Reference proteome</keyword>
<keyword id="KW-0822">Tryptophan biosynthesis</keyword>
<organism>
    <name type="scientific">Acidovorax ebreus (strain TPSY)</name>
    <name type="common">Diaphorobacter sp. (strain TPSY)</name>
    <dbReference type="NCBI Taxonomy" id="535289"/>
    <lineage>
        <taxon>Bacteria</taxon>
        <taxon>Pseudomonadati</taxon>
        <taxon>Pseudomonadota</taxon>
        <taxon>Betaproteobacteria</taxon>
        <taxon>Burkholderiales</taxon>
        <taxon>Comamonadaceae</taxon>
        <taxon>Diaphorobacter</taxon>
    </lineage>
</organism>